<proteinExistence type="inferred from homology"/>
<name>YL012_MIMIV</name>
<keyword id="KW-0175">Coiled coil</keyword>
<keyword id="KW-1185">Reference proteome</keyword>
<gene>
    <name type="ordered locus">MIMI_L12</name>
</gene>
<evidence type="ECO:0000255" key="1"/>
<evidence type="ECO:0000256" key="2">
    <source>
        <dbReference type="SAM" id="MobiDB-lite"/>
    </source>
</evidence>
<evidence type="ECO:0000305" key="3"/>
<organismHost>
    <name type="scientific">Acanthamoeba polyphaga</name>
    <name type="common">Amoeba</name>
    <dbReference type="NCBI Taxonomy" id="5757"/>
</organismHost>
<comment type="similarity">
    <text evidence="3">Belongs to the mimivirus L5 family.</text>
</comment>
<feature type="chain" id="PRO_0000071177" description="Uncharacterized protein L12">
    <location>
        <begin position="1"/>
        <end position="487"/>
    </location>
</feature>
<feature type="region of interest" description="Disordered" evidence="2">
    <location>
        <begin position="84"/>
        <end position="125"/>
    </location>
</feature>
<feature type="coiled-coil region" evidence="1">
    <location>
        <begin position="410"/>
        <end position="485"/>
    </location>
</feature>
<accession>Q5UP86</accession>
<reference key="1">
    <citation type="journal article" date="2004" name="Science">
        <title>The 1.2-megabase genome sequence of Mimivirus.</title>
        <authorList>
            <person name="Raoult D."/>
            <person name="Audic S."/>
            <person name="Robert C."/>
            <person name="Abergel C."/>
            <person name="Renesto P."/>
            <person name="Ogata H."/>
            <person name="La Scola B."/>
            <person name="Susan M."/>
            <person name="Claverie J.-M."/>
        </authorList>
    </citation>
    <scope>NUCLEOTIDE SEQUENCE [LARGE SCALE GENOMIC DNA]</scope>
    <source>
        <strain>Rowbotham-Bradford</strain>
    </source>
</reference>
<organism>
    <name type="scientific">Acanthamoeba polyphaga mimivirus</name>
    <name type="common">APMV</name>
    <dbReference type="NCBI Taxonomy" id="212035"/>
    <lineage>
        <taxon>Viruses</taxon>
        <taxon>Varidnaviria</taxon>
        <taxon>Bamfordvirae</taxon>
        <taxon>Nucleocytoviricota</taxon>
        <taxon>Megaviricetes</taxon>
        <taxon>Imitervirales</taxon>
        <taxon>Mimiviridae</taxon>
        <taxon>Megamimivirinae</taxon>
        <taxon>Mimivirus</taxon>
        <taxon>Mimivirus bradfordmassiliense</taxon>
    </lineage>
</organism>
<sequence>MNTLKDIKIKNIKYYHTDDIIGLKLSQFKSCTNGRRLISNLNIDDNNYIFATNKSGKWIETDGKSRKFDKVLIKVSWIKENILDDDENDNENDNENDVENENDVENENDDENENDDDDDENDDDDDEIIMAPGIIKLNKNEKIRDDKNKIVDIEVRGTRDPRNCFFKASDVSKGFGMKNLSDTISRSSGYKLGIHYRYFYLQKNTDSIRKKNKIKKIKKIYLTYEGLLRVMFVSKNDRVSRFIMWATNTLFTAHLGTKEQKNMLSSKLMGITTDIVKEVFNKTSSTLPTLYLFTIGKVKDLRVTLDIGEEYDDECIVAKGGETIDLTRRIDEHTESYGKMPGAKLLLKSYNYIDPQYTSKAETDLFQVLKKMNYIFKHPKYKEIIIYTKKESDLITKEFSKIARDYTGHIKEISDKLKCFENQYNIMKLEYEKEIANKEKEIMQLEKENSDLKYQNEIIELKYKNKLLEKDRKIAKLEKNIKKSGLK</sequence>
<protein>
    <recommendedName>
        <fullName>Uncharacterized protein L12</fullName>
    </recommendedName>
</protein>
<dbReference type="EMBL" id="AY653733">
    <property type="protein sequence ID" value="AAV50287.1"/>
    <property type="molecule type" value="Genomic_DNA"/>
</dbReference>
<dbReference type="SMR" id="Q5UP86"/>
<dbReference type="KEGG" id="vg:9924586"/>
<dbReference type="OrthoDB" id="35235at10239"/>
<dbReference type="Proteomes" id="UP000001134">
    <property type="component" value="Genome"/>
</dbReference>